<comment type="function">
    <text evidence="1">Transcriptional coactivator involved in neuroepithelial stem cell differentiation and neurogenesis. Involved in particular in lens epithelial cell gene regulation and stress responses. May play an important role in lens epithelial to fiber cell terminal differentiation. May play a protective role during stress-induced apoptosis (By similarity).</text>
</comment>
<comment type="subcellular location">
    <subcellularLocation>
        <location evidence="1">Nucleus</location>
    </subcellularLocation>
</comment>
<comment type="similarity">
    <text evidence="5">Belongs to the HDGF family.</text>
</comment>
<sequence length="579" mass="64927">MSRDFKPGDLIFAKMKGYPHWPARVDEVPDGAVKPPTNKMPIFFFGTHETAFLGPKDIFPYSENKDKYGKPNKRKGFNEGLWEIDNNPKVKFSHQPSHPAVNTSIKETIQESSPEAAEGSEEKSGAKRRKPSIPKLPPKGDNNSPAEAEAEEKEMHSTKEDEEPSEKNSKEGVVKTNDASIPKVARRGRKRKAEKQAESEEAAVVATAAVVAAAAAPVTVSPKVSPKRGRPAVSEVKVPKPRGRPKLVKPSCLSESDPVNEEEKAKKKGPDEKPKKQGKKDEEGQKEEEKPKKEYDKKDGKKEAEPKRKNAAKLGSASASDSEDEGGEEEGDKKKKGGRSFQSTHRRNIMRGQHEKEVTERKRKQEEQGESELQNKEEGKKTEVKKMEKKRETSMDSRLQRIHAEIKNSLKIDNLDVNRCIEALDELASLQVSMQQAQKHTEMILTLKKIRKFKVSQVIMEKSTMLYNKFKTMFLVGEGDSVLSQVLNKSLAEQKQHEEANKTKEQWKKGTNKKNEKEKDQTGSKIVNGGSETQDTNQSQHNGENAEEKDKLEVASKKKTCGEESELEKPAKESAFENK</sequence>
<accession>Q5XXA9</accession>
<dbReference type="EMBL" id="AY728140">
    <property type="protein sequence ID" value="AAU44349.1"/>
    <property type="molecule type" value="mRNA"/>
</dbReference>
<dbReference type="RefSeq" id="NP_001026781.2">
    <property type="nucleotide sequence ID" value="NM_001031610.2"/>
</dbReference>
<dbReference type="SMR" id="Q5XXA9"/>
<dbReference type="FunCoup" id="Q5XXA9">
    <property type="interactions" value="2197"/>
</dbReference>
<dbReference type="STRING" id="9031.ENSGALP00000037515"/>
<dbReference type="PaxDb" id="9031-ENSGALP00000024326"/>
<dbReference type="GeneID" id="431605"/>
<dbReference type="KEGG" id="gga:431605"/>
<dbReference type="CTD" id="11168"/>
<dbReference type="VEuPathDB" id="HostDB:geneid_431605"/>
<dbReference type="eggNOG" id="KOG1904">
    <property type="taxonomic scope" value="Eukaryota"/>
</dbReference>
<dbReference type="InParanoid" id="Q5XXA9"/>
<dbReference type="OrthoDB" id="62853at2759"/>
<dbReference type="PhylomeDB" id="Q5XXA9"/>
<dbReference type="PRO" id="PR:Q5XXA9"/>
<dbReference type="Proteomes" id="UP000000539">
    <property type="component" value="Unassembled WGS sequence"/>
</dbReference>
<dbReference type="GO" id="GO:0000791">
    <property type="term" value="C:euchromatin"/>
    <property type="evidence" value="ECO:0000250"/>
    <property type="project" value="UniProtKB"/>
</dbReference>
<dbReference type="GO" id="GO:0000792">
    <property type="term" value="C:heterochromatin"/>
    <property type="evidence" value="ECO:0000250"/>
    <property type="project" value="UniProtKB"/>
</dbReference>
<dbReference type="GO" id="GO:0005634">
    <property type="term" value="C:nucleus"/>
    <property type="evidence" value="ECO:0000314"/>
    <property type="project" value="UniProtKB"/>
</dbReference>
<dbReference type="GO" id="GO:0003682">
    <property type="term" value="F:chromatin binding"/>
    <property type="evidence" value="ECO:0000250"/>
    <property type="project" value="UniProtKB"/>
</dbReference>
<dbReference type="GO" id="GO:0140297">
    <property type="term" value="F:DNA-binding transcription factor binding"/>
    <property type="evidence" value="ECO:0000250"/>
    <property type="project" value="UniProtKB"/>
</dbReference>
<dbReference type="GO" id="GO:0097100">
    <property type="term" value="F:supercoiled DNA binding"/>
    <property type="evidence" value="ECO:0000250"/>
    <property type="project" value="UniProtKB"/>
</dbReference>
<dbReference type="GO" id="GO:0003713">
    <property type="term" value="F:transcription coactivator activity"/>
    <property type="evidence" value="ECO:0000250"/>
    <property type="project" value="UniProtKB"/>
</dbReference>
<dbReference type="GO" id="GO:0006338">
    <property type="term" value="P:chromatin remodeling"/>
    <property type="evidence" value="ECO:0000318"/>
    <property type="project" value="GO_Central"/>
</dbReference>
<dbReference type="GO" id="GO:0000395">
    <property type="term" value="P:mRNA 5'-splice site recognition"/>
    <property type="evidence" value="ECO:0000250"/>
    <property type="project" value="UniProtKB"/>
</dbReference>
<dbReference type="GO" id="GO:0045944">
    <property type="term" value="P:positive regulation of transcription by RNA polymerase II"/>
    <property type="evidence" value="ECO:0000250"/>
    <property type="project" value="UniProtKB"/>
</dbReference>
<dbReference type="GO" id="GO:0009408">
    <property type="term" value="P:response to heat"/>
    <property type="evidence" value="ECO:0000250"/>
    <property type="project" value="UniProtKB"/>
</dbReference>
<dbReference type="GO" id="GO:0006979">
    <property type="term" value="P:response to oxidative stress"/>
    <property type="evidence" value="ECO:0000250"/>
    <property type="project" value="UniProtKB"/>
</dbReference>
<dbReference type="CDD" id="cd20151">
    <property type="entry name" value="PWWP_PSIP"/>
    <property type="match status" value="1"/>
</dbReference>
<dbReference type="FunFam" id="2.30.30.140:FF:000017">
    <property type="entry name" value="hepatoma-derived growth factor isoform X1"/>
    <property type="match status" value="1"/>
</dbReference>
<dbReference type="FunFam" id="1.20.930.10:FF:000005">
    <property type="entry name" value="PC4 and SFRS1-interacting protein-like isoform X1"/>
    <property type="match status" value="1"/>
</dbReference>
<dbReference type="Gene3D" id="2.30.30.140">
    <property type="match status" value="1"/>
</dbReference>
<dbReference type="Gene3D" id="1.20.930.10">
    <property type="entry name" value="Conserved domain common to transcription factors TFIIS, elongin A, CRSP70"/>
    <property type="match status" value="1"/>
</dbReference>
<dbReference type="InterPro" id="IPR036218">
    <property type="entry name" value="HIVI-bd_sf"/>
</dbReference>
<dbReference type="InterPro" id="IPR021567">
    <property type="entry name" value="LEDGF_IBD"/>
</dbReference>
<dbReference type="InterPro" id="IPR000313">
    <property type="entry name" value="PWWP_dom"/>
</dbReference>
<dbReference type="InterPro" id="IPR035441">
    <property type="entry name" value="TFIIS/LEDGF_dom_sf"/>
</dbReference>
<dbReference type="PANTHER" id="PTHR12550">
    <property type="entry name" value="HEPATOMA-DERIVED GROWTH FACTOR-RELATED"/>
    <property type="match status" value="1"/>
</dbReference>
<dbReference type="PANTHER" id="PTHR12550:SF42">
    <property type="entry name" value="PC4 AND SFRS1-INTERACTING PROTEIN"/>
    <property type="match status" value="1"/>
</dbReference>
<dbReference type="Pfam" id="PF11467">
    <property type="entry name" value="LEDGF"/>
    <property type="match status" value="1"/>
</dbReference>
<dbReference type="Pfam" id="PF00855">
    <property type="entry name" value="PWWP"/>
    <property type="match status" value="1"/>
</dbReference>
<dbReference type="SMART" id="SM00293">
    <property type="entry name" value="PWWP"/>
    <property type="match status" value="1"/>
</dbReference>
<dbReference type="SUPFAM" id="SSF140576">
    <property type="entry name" value="HIV integrase-binding domain"/>
    <property type="match status" value="1"/>
</dbReference>
<dbReference type="SUPFAM" id="SSF63748">
    <property type="entry name" value="Tudor/PWWP/MBT"/>
    <property type="match status" value="1"/>
</dbReference>
<dbReference type="PROSITE" id="PS50812">
    <property type="entry name" value="PWWP"/>
    <property type="match status" value="1"/>
</dbReference>
<gene>
    <name type="primary">PSIP1</name>
    <name type="synonym">LEDGF</name>
</gene>
<keyword id="KW-0175">Coiled coil</keyword>
<keyword id="KW-0238">DNA-binding</keyword>
<keyword id="KW-0539">Nucleus</keyword>
<keyword id="KW-1185">Reference proteome</keyword>
<keyword id="KW-0804">Transcription</keyword>
<keyword id="KW-0805">Transcription regulation</keyword>
<evidence type="ECO:0000250" key="1">
    <source>
        <dbReference type="UniProtKB" id="O75475"/>
    </source>
</evidence>
<evidence type="ECO:0000255" key="2"/>
<evidence type="ECO:0000255" key="3">
    <source>
        <dbReference type="PROSITE-ProRule" id="PRU00162"/>
    </source>
</evidence>
<evidence type="ECO:0000256" key="4">
    <source>
        <dbReference type="SAM" id="MobiDB-lite"/>
    </source>
</evidence>
<evidence type="ECO:0000305" key="5"/>
<name>PSIP1_CHICK</name>
<proteinExistence type="evidence at transcript level"/>
<feature type="chain" id="PRO_0000191711" description="Lens epithelium-derived growth factor">
    <location>
        <begin position="1"/>
        <end position="579"/>
    </location>
</feature>
<feature type="domain" description="PWWP" evidence="3">
    <location>
        <begin position="1"/>
        <end position="64"/>
    </location>
</feature>
<feature type="region of interest" description="Disordered" evidence="4">
    <location>
        <begin position="62"/>
        <end position="81"/>
    </location>
</feature>
<feature type="region of interest" description="Disordered" evidence="4">
    <location>
        <begin position="88"/>
        <end position="203"/>
    </location>
</feature>
<feature type="region of interest" description="Disordered" evidence="4">
    <location>
        <begin position="215"/>
        <end position="397"/>
    </location>
</feature>
<feature type="region of interest" description="Integrase-binding domain (IBD)" evidence="1">
    <location>
        <begin position="387"/>
        <end position="464"/>
    </location>
</feature>
<feature type="region of interest" description="Disordered" evidence="4">
    <location>
        <begin position="492"/>
        <end position="579"/>
    </location>
</feature>
<feature type="coiled-coil region" evidence="2">
    <location>
        <begin position="347"/>
        <end position="442"/>
    </location>
</feature>
<feature type="short sequence motif" description="Nuclear localization signal" evidence="1">
    <location>
        <begin position="186"/>
        <end position="196"/>
    </location>
</feature>
<feature type="compositionally biased region" description="Polar residues" evidence="4">
    <location>
        <begin position="94"/>
        <end position="107"/>
    </location>
</feature>
<feature type="compositionally biased region" description="Basic and acidic residues" evidence="4">
    <location>
        <begin position="153"/>
        <end position="173"/>
    </location>
</feature>
<feature type="compositionally biased region" description="Basic residues" evidence="4">
    <location>
        <begin position="184"/>
        <end position="193"/>
    </location>
</feature>
<feature type="compositionally biased region" description="Low complexity" evidence="4">
    <location>
        <begin position="215"/>
        <end position="224"/>
    </location>
</feature>
<feature type="compositionally biased region" description="Basic and acidic residues" evidence="4">
    <location>
        <begin position="261"/>
        <end position="308"/>
    </location>
</feature>
<feature type="compositionally biased region" description="Acidic residues" evidence="4">
    <location>
        <begin position="321"/>
        <end position="330"/>
    </location>
</feature>
<feature type="compositionally biased region" description="Basic residues" evidence="4">
    <location>
        <begin position="334"/>
        <end position="349"/>
    </location>
</feature>
<feature type="compositionally biased region" description="Basic and acidic residues" evidence="4">
    <location>
        <begin position="352"/>
        <end position="397"/>
    </location>
</feature>
<feature type="compositionally biased region" description="Basic and acidic residues" evidence="4">
    <location>
        <begin position="492"/>
        <end position="522"/>
    </location>
</feature>
<feature type="compositionally biased region" description="Polar residues" evidence="4">
    <location>
        <begin position="530"/>
        <end position="543"/>
    </location>
</feature>
<feature type="compositionally biased region" description="Basic and acidic residues" evidence="4">
    <location>
        <begin position="544"/>
        <end position="579"/>
    </location>
</feature>
<reference key="1">
    <citation type="journal article" date="2004" name="J. Biol. Chem.">
        <title>Identification of an evolutionarily conserved domain in human lens epithelium-derived growth factor/transcriptional co-activator p75 (LEDGF/p75) that binds HIV-1 integrase.</title>
        <authorList>
            <person name="Cherepanov P."/>
            <person name="Devroe E."/>
            <person name="Silver P.A."/>
            <person name="Engelman A."/>
        </authorList>
    </citation>
    <scope>NUCLEOTIDE SEQUENCE [MRNA]</scope>
</reference>
<protein>
    <recommendedName>
        <fullName>Lens epithelium-derived growth factor</fullName>
    </recommendedName>
</protein>
<organism>
    <name type="scientific">Gallus gallus</name>
    <name type="common">Chicken</name>
    <dbReference type="NCBI Taxonomy" id="9031"/>
    <lineage>
        <taxon>Eukaryota</taxon>
        <taxon>Metazoa</taxon>
        <taxon>Chordata</taxon>
        <taxon>Craniata</taxon>
        <taxon>Vertebrata</taxon>
        <taxon>Euteleostomi</taxon>
        <taxon>Archelosauria</taxon>
        <taxon>Archosauria</taxon>
        <taxon>Dinosauria</taxon>
        <taxon>Saurischia</taxon>
        <taxon>Theropoda</taxon>
        <taxon>Coelurosauria</taxon>
        <taxon>Aves</taxon>
        <taxon>Neognathae</taxon>
        <taxon>Galloanserae</taxon>
        <taxon>Galliformes</taxon>
        <taxon>Phasianidae</taxon>
        <taxon>Phasianinae</taxon>
        <taxon>Gallus</taxon>
    </lineage>
</organism>